<gene>
    <name evidence="1" type="primary">eutC</name>
    <name type="ordered locus">CTC_02175</name>
</gene>
<sequence>MFSESDLKRLVEEVLVEMTTKEGANIKDTPVSQPTPTVVDEDGIIPDITEVDIRTNLLVDNPENAEEYLKMKKHTPARIGVGKAGTRYKTETILRFRADHAAAQDAVFTDVDEKILEEMNLETIQTMCSSKDEFITRPDLGRKISKEELSKLSSYKKNAQVQIYVSDGLSSKAVEANVKNILPALIQGLEGYGISVGKPFFVKLGRVGAMDVISEEFGADVTCVLIGERPGLVTAESMSAYIAYKGTVGMPESRRTVVSNIHKGGTPAVEAGAYIADIIKLMLEKKASGLDLKL</sequence>
<dbReference type="EC" id="4.3.1.7" evidence="1"/>
<dbReference type="EMBL" id="AE015927">
    <property type="protein sequence ID" value="AAO36665.1"/>
    <property type="molecule type" value="Genomic_DNA"/>
</dbReference>
<dbReference type="RefSeq" id="WP_011100323.1">
    <property type="nucleotide sequence ID" value="NC_004557.1"/>
</dbReference>
<dbReference type="SMR" id="Q892D0"/>
<dbReference type="STRING" id="212717.CTC_02175"/>
<dbReference type="GeneID" id="24253590"/>
<dbReference type="KEGG" id="ctc:CTC_02175"/>
<dbReference type="HOGENOM" id="CLU_068224_0_0_9"/>
<dbReference type="OrthoDB" id="114248at2"/>
<dbReference type="UniPathway" id="UPA00560"/>
<dbReference type="Proteomes" id="UP000001412">
    <property type="component" value="Chromosome"/>
</dbReference>
<dbReference type="GO" id="GO:0009350">
    <property type="term" value="C:ethanolamine ammonia-lyase complex"/>
    <property type="evidence" value="ECO:0007669"/>
    <property type="project" value="UniProtKB-UniRule"/>
</dbReference>
<dbReference type="GO" id="GO:0031471">
    <property type="term" value="C:ethanolamine degradation polyhedral organelle"/>
    <property type="evidence" value="ECO:0007669"/>
    <property type="project" value="UniProtKB-UniRule"/>
</dbReference>
<dbReference type="GO" id="GO:0031419">
    <property type="term" value="F:cobalamin binding"/>
    <property type="evidence" value="ECO:0007669"/>
    <property type="project" value="UniProtKB-UniRule"/>
</dbReference>
<dbReference type="GO" id="GO:0008851">
    <property type="term" value="F:ethanolamine ammonia-lyase activity"/>
    <property type="evidence" value="ECO:0007669"/>
    <property type="project" value="UniProtKB-UniRule"/>
</dbReference>
<dbReference type="GO" id="GO:0006520">
    <property type="term" value="P:amino acid metabolic process"/>
    <property type="evidence" value="ECO:0007669"/>
    <property type="project" value="InterPro"/>
</dbReference>
<dbReference type="GO" id="GO:0046336">
    <property type="term" value="P:ethanolamine catabolic process"/>
    <property type="evidence" value="ECO:0007669"/>
    <property type="project" value="UniProtKB-UniRule"/>
</dbReference>
<dbReference type="FunFam" id="1.10.30.40:FF:000001">
    <property type="entry name" value="Ethanolamine ammonia-lyase light chain"/>
    <property type="match status" value="1"/>
</dbReference>
<dbReference type="Gene3D" id="3.40.50.11240">
    <property type="entry name" value="Ethanolamine ammonia-lyase light chain (EutC)"/>
    <property type="match status" value="1"/>
</dbReference>
<dbReference type="Gene3D" id="1.10.30.40">
    <property type="entry name" value="Ethanolamine ammonia-lyase light chain (EutC), N-terminal domain"/>
    <property type="match status" value="1"/>
</dbReference>
<dbReference type="HAMAP" id="MF_00601">
    <property type="entry name" value="EutC"/>
    <property type="match status" value="1"/>
</dbReference>
<dbReference type="InterPro" id="IPR009246">
    <property type="entry name" value="EutC"/>
</dbReference>
<dbReference type="InterPro" id="IPR042251">
    <property type="entry name" value="EutC_C"/>
</dbReference>
<dbReference type="InterPro" id="IPR042255">
    <property type="entry name" value="EutC_N"/>
</dbReference>
<dbReference type="NCBIfam" id="NF003971">
    <property type="entry name" value="PRK05465.1"/>
    <property type="match status" value="1"/>
</dbReference>
<dbReference type="PANTHER" id="PTHR39330">
    <property type="entry name" value="ETHANOLAMINE AMMONIA-LYASE LIGHT CHAIN"/>
    <property type="match status" value="1"/>
</dbReference>
<dbReference type="PANTHER" id="PTHR39330:SF1">
    <property type="entry name" value="ETHANOLAMINE AMMONIA-LYASE SMALL SUBUNIT"/>
    <property type="match status" value="1"/>
</dbReference>
<dbReference type="Pfam" id="PF05985">
    <property type="entry name" value="EutC"/>
    <property type="match status" value="1"/>
</dbReference>
<dbReference type="PIRSF" id="PIRSF018982">
    <property type="entry name" value="EutC"/>
    <property type="match status" value="1"/>
</dbReference>
<comment type="function">
    <text evidence="1">Catalyzes the deamination of various vicinal amino-alcohols to oxo compounds. Allows this organism to utilize ethanolamine as the sole source of nitrogen and carbon in the presence of external vitamin B12.</text>
</comment>
<comment type="catalytic activity">
    <reaction evidence="1">
        <text>ethanolamine = acetaldehyde + NH4(+)</text>
        <dbReference type="Rhea" id="RHEA:15313"/>
        <dbReference type="ChEBI" id="CHEBI:15343"/>
        <dbReference type="ChEBI" id="CHEBI:28938"/>
        <dbReference type="ChEBI" id="CHEBI:57603"/>
        <dbReference type="EC" id="4.3.1.7"/>
    </reaction>
</comment>
<comment type="cofactor">
    <cofactor evidence="1">
        <name>adenosylcob(III)alamin</name>
        <dbReference type="ChEBI" id="CHEBI:18408"/>
    </cofactor>
    <text evidence="1">Binds between the large and small subunits.</text>
</comment>
<comment type="pathway">
    <text evidence="1">Amine and polyamine degradation; ethanolamine degradation.</text>
</comment>
<comment type="subunit">
    <text evidence="1">The basic unit is a heterodimer which dimerizes to form tetramers. The heterotetramers trimerize; 6 large subunits form a core ring with 6 small subunits projecting outwards.</text>
</comment>
<comment type="subcellular location">
    <subcellularLocation>
        <location evidence="1">Bacterial microcompartment</location>
    </subcellularLocation>
</comment>
<comment type="similarity">
    <text evidence="1">Belongs to the EutC family.</text>
</comment>
<reference key="1">
    <citation type="journal article" date="2003" name="Proc. Natl. Acad. Sci. U.S.A.">
        <title>The genome sequence of Clostridium tetani, the causative agent of tetanus disease.</title>
        <authorList>
            <person name="Brueggemann H."/>
            <person name="Baeumer S."/>
            <person name="Fricke W.F."/>
            <person name="Wiezer A."/>
            <person name="Liesegang H."/>
            <person name="Decker I."/>
            <person name="Herzberg C."/>
            <person name="Martinez-Arias R."/>
            <person name="Merkl R."/>
            <person name="Henne A."/>
            <person name="Gottschalk G."/>
        </authorList>
    </citation>
    <scope>NUCLEOTIDE SEQUENCE [LARGE SCALE GENOMIC DNA]</scope>
    <source>
        <strain>Massachusetts / E88</strain>
    </source>
</reference>
<organism>
    <name type="scientific">Clostridium tetani (strain Massachusetts / E88)</name>
    <dbReference type="NCBI Taxonomy" id="212717"/>
    <lineage>
        <taxon>Bacteria</taxon>
        <taxon>Bacillati</taxon>
        <taxon>Bacillota</taxon>
        <taxon>Clostridia</taxon>
        <taxon>Eubacteriales</taxon>
        <taxon>Clostridiaceae</taxon>
        <taxon>Clostridium</taxon>
    </lineage>
</organism>
<proteinExistence type="inferred from homology"/>
<evidence type="ECO:0000255" key="1">
    <source>
        <dbReference type="HAMAP-Rule" id="MF_00601"/>
    </source>
</evidence>
<feature type="chain" id="PRO_0000205987" description="Ethanolamine ammonia-lyase small subunit">
    <location>
        <begin position="1"/>
        <end position="294"/>
    </location>
</feature>
<feature type="binding site" evidence="1">
    <location>
        <position position="207"/>
    </location>
    <ligand>
        <name>adenosylcob(III)alamin</name>
        <dbReference type="ChEBI" id="CHEBI:18408"/>
    </ligand>
</feature>
<feature type="binding site" evidence="1">
    <location>
        <position position="228"/>
    </location>
    <ligand>
        <name>adenosylcob(III)alamin</name>
        <dbReference type="ChEBI" id="CHEBI:18408"/>
    </ligand>
</feature>
<protein>
    <recommendedName>
        <fullName evidence="1">Ethanolamine ammonia-lyase small subunit</fullName>
        <shortName evidence="1">EAL small subunit</shortName>
        <ecNumber evidence="1">4.3.1.7</ecNumber>
    </recommendedName>
</protein>
<name>EUTC_CLOTE</name>
<keyword id="KW-1283">Bacterial microcompartment</keyword>
<keyword id="KW-0846">Cobalamin</keyword>
<keyword id="KW-0170">Cobalt</keyword>
<keyword id="KW-0456">Lyase</keyword>
<keyword id="KW-1185">Reference proteome</keyword>
<accession>Q892D0</accession>